<protein>
    <recommendedName>
        <fullName>Homeobox protein PKNOX1</fullName>
    </recommendedName>
    <alternativeName>
        <fullName>Homeobox protein PREP-1</fullName>
    </alternativeName>
    <alternativeName>
        <fullName>PBX/knotted homeobox 1</fullName>
    </alternativeName>
</protein>
<comment type="function">
    <text evidence="1">Activates transcription in the presence of PBX1A and HOXA1.</text>
</comment>
<comment type="subunit">
    <text evidence="7">Interacts with MN1.</text>
</comment>
<comment type="interaction">
    <interactant intactId="EBI-1373569">
        <id>P55347</id>
    </interactant>
    <interactant intactId="EBI-465861">
        <id>Q8TDH9</id>
        <label>BLOC1S5</label>
    </interactant>
    <organismsDiffer>false</organismsDiffer>
    <experiments>3</experiments>
</comment>
<comment type="interaction">
    <interactant intactId="EBI-1373569">
        <id>P55347</id>
    </interactant>
    <interactant intactId="EBI-10193358">
        <id>Q96GS4</id>
        <label>BORCS6</label>
    </interactant>
    <organismsDiffer>false</organismsDiffer>
    <experiments>4</experiments>
</comment>
<comment type="interaction">
    <interactant intactId="EBI-1373569">
        <id>P55347</id>
    </interactant>
    <interactant intactId="EBI-2558383">
        <id>Q8TC76</id>
        <label>FAM110B</label>
    </interactant>
    <organismsDiffer>false</organismsDiffer>
    <experiments>3</experiments>
</comment>
<comment type="interaction">
    <interactant intactId="EBI-1373569">
        <id>P55347</id>
    </interactant>
    <interactant intactId="EBI-701903">
        <id>Q14192</id>
        <label>FHL2</label>
    </interactant>
    <organismsDiffer>false</organismsDiffer>
    <experiments>5</experiments>
</comment>
<comment type="interaction">
    <interactant intactId="EBI-1373569">
        <id>P55347</id>
    </interactant>
    <interactant intactId="EBI-1057009">
        <id>P26583</id>
        <label>HMGB2</label>
    </interactant>
    <organismsDiffer>false</organismsDiffer>
    <experiments>4</experiments>
</comment>
<comment type="interaction">
    <interactant intactId="EBI-1373569">
        <id>P55347</id>
    </interactant>
    <interactant intactId="EBI-948266">
        <id>O14901</id>
        <label>KLF11</label>
    </interactant>
    <organismsDiffer>false</organismsDiffer>
    <experiments>3</experiments>
</comment>
<comment type="interaction">
    <interactant intactId="EBI-1373569">
        <id>P55347</id>
    </interactant>
    <interactant intactId="EBI-716157">
        <id>Q13368</id>
        <label>MPP3</label>
    </interactant>
    <organismsDiffer>false</organismsDiffer>
    <experiments>3</experiments>
</comment>
<comment type="interaction">
    <interactant intactId="EBI-1373569">
        <id>P55347</id>
    </interactant>
    <interactant intactId="EBI-2811583">
        <id>Q9BVL2</id>
        <label>NUP58</label>
    </interactant>
    <organismsDiffer>false</organismsDiffer>
    <experiments>6</experiments>
</comment>
<comment type="interaction">
    <interactant intactId="EBI-1373569">
        <id>P55347</id>
    </interactant>
    <interactant intactId="EBI-301611">
        <id>P40424</id>
        <label>PBX1</label>
    </interactant>
    <organismsDiffer>false</organismsDiffer>
    <experiments>12</experiments>
</comment>
<comment type="interaction">
    <interactant intactId="EBI-1373569">
        <id>P55347</id>
    </interactant>
    <interactant intactId="EBI-348489">
        <id>P40425</id>
        <label>PBX2</label>
    </interactant>
    <organismsDiffer>false</organismsDiffer>
    <experiments>4</experiments>
</comment>
<comment type="interaction">
    <interactant intactId="EBI-1373569">
        <id>P55347</id>
    </interactant>
    <interactant intactId="EBI-10302990">
        <id>Q9BYU1</id>
        <label>PBX4</label>
    </interactant>
    <organismsDiffer>false</organismsDiffer>
    <experiments>7</experiments>
</comment>
<comment type="interaction">
    <interactant intactId="EBI-1373569">
        <id>P55347</id>
    </interactant>
    <interactant intactId="EBI-2559305">
        <id>A5D8V6</id>
        <label>VPS37C</label>
    </interactant>
    <organismsDiffer>false</organismsDiffer>
    <experiments>4</experiments>
</comment>
<comment type="subcellular location">
    <subcellularLocation>
        <location evidence="11">Nucleus</location>
    </subcellularLocation>
</comment>
<comment type="alternative products">
    <event type="alternative splicing"/>
    <isoform>
        <id>P55347-1</id>
        <name>1</name>
        <sequence type="displayed"/>
    </isoform>
    <isoform>
        <id>P55347-2</id>
        <name>2</name>
        <name>PKNOX1B</name>
        <sequence type="described" ref="VSP_017260"/>
    </isoform>
</comment>
<comment type="tissue specificity">
    <text evidence="5 8">Ubiquitous. Isoform 2 is expressed in all examined tissues except in bone marrow.</text>
</comment>
<comment type="similarity">
    <text evidence="11">Belongs to the TALE/MEIS homeobox family.</text>
</comment>
<comment type="sequence caution" evidence="11">
    <conflict type="erroneous initiation">
        <sequence resource="EMBL-CDS" id="AAC51243"/>
    </conflict>
</comment>
<comment type="sequence caution" evidence="11">
    <conflict type="erroneous initiation">
        <sequence resource="EMBL-CDS" id="BAA95533"/>
    </conflict>
</comment>
<reference key="1">
    <citation type="journal article" date="1997" name="Genomics">
        <title>Cloning of a novel homeobox-containing gene, PKNOX1, and mapping to human chromosome 21q22.3.</title>
        <authorList>
            <person name="Chen H."/>
            <person name="Rossier C."/>
            <person name="Nakamura Y."/>
            <person name="Lynn A."/>
            <person name="Chakravarti A."/>
            <person name="Antonarakis S.E."/>
        </authorList>
    </citation>
    <scope>NUCLEOTIDE SEQUENCE [MRNA] (ISOFORM 1)</scope>
    <scope>TISSUE SPECIFICITY</scope>
</reference>
<reference key="2">
    <citation type="journal article" date="1998" name="Genomics">
        <title>PKNOX1, a gene encoding PREP1, a new regulator of Pbx activity, maps on human chromosome 21q22.3 and murine chromosome 17B/C.</title>
        <authorList>
            <person name="Berthelsen J."/>
            <person name="Viggiano L."/>
            <person name="Schulz H."/>
            <person name="Ferretti E."/>
            <person name="Consalez G.G."/>
            <person name="Rocchi M."/>
            <person name="Blasi F."/>
        </authorList>
    </citation>
    <scope>NUCLEOTIDE SEQUENCE [MRNA] (ISOFORM 1)</scope>
</reference>
<reference key="3">
    <citation type="journal article" date="2004" name="Yi Chuan Xue Bao">
        <title>Molecular cloning for an alternatively splicing cDNA of human PKNOX1 gene and it's expression analysis.</title>
        <authorList>
            <person name="Ni B."/>
            <person name="Li L.Y."/>
            <person name="Yin Z.C."/>
            <person name="Zou Y.H."/>
            <person name="Li H."/>
        </authorList>
    </citation>
    <scope>NUCLEOTIDE SEQUENCE [MRNA] (ISOFORM 2)</scope>
    <scope>TISSUE SPECIFICITY</scope>
</reference>
<reference key="4">
    <citation type="journal article" date="2000" name="Nature">
        <title>The DNA sequence of human chromosome 21.</title>
        <authorList>
            <person name="Hattori M."/>
            <person name="Fujiyama A."/>
            <person name="Taylor T.D."/>
            <person name="Watanabe H."/>
            <person name="Yada T."/>
            <person name="Park H.-S."/>
            <person name="Toyoda A."/>
            <person name="Ishii K."/>
            <person name="Totoki Y."/>
            <person name="Choi D.-K."/>
            <person name="Groner Y."/>
            <person name="Soeda E."/>
            <person name="Ohki M."/>
            <person name="Takagi T."/>
            <person name="Sakaki Y."/>
            <person name="Taudien S."/>
            <person name="Blechschmidt K."/>
            <person name="Polley A."/>
            <person name="Menzel U."/>
            <person name="Delabar J."/>
            <person name="Kumpf K."/>
            <person name="Lehmann R."/>
            <person name="Patterson D."/>
            <person name="Reichwald K."/>
            <person name="Rump A."/>
            <person name="Schillhabel M."/>
            <person name="Schudy A."/>
            <person name="Zimmermann W."/>
            <person name="Rosenthal A."/>
            <person name="Kudoh J."/>
            <person name="Shibuya K."/>
            <person name="Kawasaki K."/>
            <person name="Asakawa S."/>
            <person name="Shintani A."/>
            <person name="Sasaki T."/>
            <person name="Nagamine K."/>
            <person name="Mitsuyama S."/>
            <person name="Antonarakis S.E."/>
            <person name="Minoshima S."/>
            <person name="Shimizu N."/>
            <person name="Nordsiek G."/>
            <person name="Hornischer K."/>
            <person name="Brandt P."/>
            <person name="Scharfe M."/>
            <person name="Schoen O."/>
            <person name="Desario A."/>
            <person name="Reichelt J."/>
            <person name="Kauer G."/>
            <person name="Bloecker H."/>
            <person name="Ramser J."/>
            <person name="Beck A."/>
            <person name="Klages S."/>
            <person name="Hennig S."/>
            <person name="Riesselmann L."/>
            <person name="Dagand E."/>
            <person name="Wehrmeyer S."/>
            <person name="Borzym K."/>
            <person name="Gardiner K."/>
            <person name="Nizetic D."/>
            <person name="Francis F."/>
            <person name="Lehrach H."/>
            <person name="Reinhardt R."/>
            <person name="Yaspo M.-L."/>
        </authorList>
    </citation>
    <scope>NUCLEOTIDE SEQUENCE [LARGE SCALE GENOMIC DNA]</scope>
</reference>
<reference key="5">
    <citation type="journal article" date="2014" name="J. Proteomics">
        <title>An enzyme assisted RP-RPLC approach for in-depth analysis of human liver phosphoproteome.</title>
        <authorList>
            <person name="Bian Y."/>
            <person name="Song C."/>
            <person name="Cheng K."/>
            <person name="Dong M."/>
            <person name="Wang F."/>
            <person name="Huang J."/>
            <person name="Sun D."/>
            <person name="Wang L."/>
            <person name="Ye M."/>
            <person name="Zou H."/>
        </authorList>
    </citation>
    <scope>PHOSPHORYLATION [LARGE SCALE ANALYSIS] AT SER-41</scope>
    <scope>IDENTIFICATION BY MASS SPECTROMETRY [LARGE SCALE ANALYSIS]</scope>
    <source>
        <tissue>Liver</tissue>
    </source>
</reference>
<reference key="6">
    <citation type="journal article" date="2020" name="Am. J. Hum. Genet.">
        <title>Gain-of-function MN1 truncation variants cause a recognizable syndrome with craniofacial and brain abnormalities.</title>
        <authorList>
            <person name="Miyake N."/>
            <person name="Takahashi H."/>
            <person name="Nakamura K."/>
            <person name="Isidor B."/>
            <person name="Hiraki Y."/>
            <person name="Koshimizu E."/>
            <person name="Shiina M."/>
            <person name="Sasaki K."/>
            <person name="Suzuki H."/>
            <person name="Abe R."/>
            <person name="Kimura Y."/>
            <person name="Akiyama T."/>
            <person name="Tomizawa S.I."/>
            <person name="Hirose T."/>
            <person name="Hamanaka K."/>
            <person name="Miyatake S."/>
            <person name="Mitsuhashi S."/>
            <person name="Mizuguchi T."/>
            <person name="Takata A."/>
            <person name="Obo K."/>
            <person name="Kato M."/>
            <person name="Ogata K."/>
            <person name="Matsumoto N."/>
        </authorList>
    </citation>
    <scope>INTERACTION WITH MN1</scope>
</reference>
<reference key="7">
    <citation type="submission" date="2005-10" db="PDB data bank">
        <title>Solution structure of the homeobox domain of human homeobox protein PKNOX1.</title>
        <authorList>
            <consortium name="RIKEN structural genomics initiative (RSGI)"/>
        </authorList>
    </citation>
    <scope>STRUCTURE BY NMR OF 258-319</scope>
</reference>
<reference key="8">
    <citation type="journal article" date="2006" name="Science">
        <title>The consensus coding sequences of human breast and colorectal cancers.</title>
        <authorList>
            <person name="Sjoeblom T."/>
            <person name="Jones S."/>
            <person name="Wood L.D."/>
            <person name="Parsons D.W."/>
            <person name="Lin J."/>
            <person name="Barber T.D."/>
            <person name="Mandelker D."/>
            <person name="Leary R.J."/>
            <person name="Ptak J."/>
            <person name="Silliman N."/>
            <person name="Szabo S."/>
            <person name="Buckhaults P."/>
            <person name="Farrell C."/>
            <person name="Meeh P."/>
            <person name="Markowitz S.D."/>
            <person name="Willis J."/>
            <person name="Dawson D."/>
            <person name="Willson J.K.V."/>
            <person name="Gazdar A.F."/>
            <person name="Hartigan J."/>
            <person name="Wu L."/>
            <person name="Liu C."/>
            <person name="Parmigiani G."/>
            <person name="Park B.H."/>
            <person name="Bachman K.E."/>
            <person name="Papadopoulos N."/>
            <person name="Vogelstein B."/>
            <person name="Kinzler K.W."/>
            <person name="Velculescu V.E."/>
        </authorList>
    </citation>
    <scope>VARIANT [LARGE SCALE ANALYSIS] ILE-265</scope>
</reference>
<dbReference type="EMBL" id="U68727">
    <property type="protein sequence ID" value="AAC51243.1"/>
    <property type="status" value="ALT_INIT"/>
    <property type="molecule type" value="mRNA"/>
</dbReference>
<dbReference type="EMBL" id="Y13613">
    <property type="protein sequence ID" value="CAA73934.1"/>
    <property type="molecule type" value="mRNA"/>
</dbReference>
<dbReference type="EMBL" id="AY142115">
    <property type="protein sequence ID" value="AAN34940.1"/>
    <property type="molecule type" value="mRNA"/>
</dbReference>
<dbReference type="EMBL" id="AP001748">
    <property type="protein sequence ID" value="BAA95533.1"/>
    <property type="status" value="ALT_INIT"/>
    <property type="molecule type" value="Genomic_DNA"/>
</dbReference>
<dbReference type="CCDS" id="CCDS13692.1">
    <molecule id="P55347-1"/>
</dbReference>
<dbReference type="RefSeq" id="NP_004562.2">
    <molecule id="P55347-1"/>
    <property type="nucleotide sequence ID" value="NM_004571.4"/>
</dbReference>
<dbReference type="RefSeq" id="XP_047296782.1">
    <molecule id="P55347-1"/>
    <property type="nucleotide sequence ID" value="XM_047440826.1"/>
</dbReference>
<dbReference type="RefSeq" id="XP_047296783.1">
    <molecule id="P55347-1"/>
    <property type="nucleotide sequence ID" value="XM_047440827.1"/>
</dbReference>
<dbReference type="RefSeq" id="XP_047296785.1">
    <molecule id="P55347-1"/>
    <property type="nucleotide sequence ID" value="XM_047440829.1"/>
</dbReference>
<dbReference type="RefSeq" id="XP_054180526.1">
    <molecule id="P55347-1"/>
    <property type="nucleotide sequence ID" value="XM_054324551.1"/>
</dbReference>
<dbReference type="RefSeq" id="XP_054180527.1">
    <molecule id="P55347-1"/>
    <property type="nucleotide sequence ID" value="XM_054324552.1"/>
</dbReference>
<dbReference type="RefSeq" id="XP_054180528.1">
    <molecule id="P55347-1"/>
    <property type="nucleotide sequence ID" value="XM_054324553.1"/>
</dbReference>
<dbReference type="RefSeq" id="XP_054180529.1">
    <molecule id="P55347-1"/>
    <property type="nucleotide sequence ID" value="XM_054324554.1"/>
</dbReference>
<dbReference type="RefSeq" id="XP_054180531.1">
    <molecule id="P55347-1"/>
    <property type="nucleotide sequence ID" value="XM_054324556.1"/>
</dbReference>
<dbReference type="PDB" id="1X2N">
    <property type="method" value="NMR"/>
    <property type="chains" value="A=260-319"/>
</dbReference>
<dbReference type="PDBsum" id="1X2N"/>
<dbReference type="SASBDB" id="P55347"/>
<dbReference type="SMR" id="P55347"/>
<dbReference type="BioGRID" id="111333">
    <property type="interactions" value="69"/>
</dbReference>
<dbReference type="CORUM" id="P55347"/>
<dbReference type="FunCoup" id="P55347">
    <property type="interactions" value="2950"/>
</dbReference>
<dbReference type="IntAct" id="P55347">
    <property type="interactions" value="62"/>
</dbReference>
<dbReference type="MINT" id="P55347"/>
<dbReference type="STRING" id="9606.ENSP00000291547"/>
<dbReference type="BindingDB" id="P55347"/>
<dbReference type="GlyGen" id="P55347">
    <property type="glycosylation" value="1 site, 1 O-linked glycan (1 site)"/>
</dbReference>
<dbReference type="iPTMnet" id="P55347"/>
<dbReference type="PhosphoSitePlus" id="P55347"/>
<dbReference type="BioMuta" id="PKNOX1"/>
<dbReference type="DMDM" id="115311619"/>
<dbReference type="jPOST" id="P55347"/>
<dbReference type="MassIVE" id="P55347"/>
<dbReference type="PaxDb" id="9606-ENSP00000291547"/>
<dbReference type="PeptideAtlas" id="P55347"/>
<dbReference type="ProteomicsDB" id="56856">
    <molecule id="P55347-1"/>
</dbReference>
<dbReference type="ProteomicsDB" id="56857">
    <molecule id="P55347-2"/>
</dbReference>
<dbReference type="Pumba" id="P55347"/>
<dbReference type="Antibodypedia" id="3800">
    <property type="antibodies" value="237 antibodies from 29 providers"/>
</dbReference>
<dbReference type="DNASU" id="5316"/>
<dbReference type="Ensembl" id="ENST00000291547.10">
    <molecule id="P55347-1"/>
    <property type="protein sequence ID" value="ENSP00000291547.4"/>
    <property type="gene ID" value="ENSG00000160199.15"/>
</dbReference>
<dbReference type="GeneID" id="5316"/>
<dbReference type="KEGG" id="hsa:5316"/>
<dbReference type="MANE-Select" id="ENST00000291547.10">
    <property type="protein sequence ID" value="ENSP00000291547.4"/>
    <property type="RefSeq nucleotide sequence ID" value="NM_004571.5"/>
    <property type="RefSeq protein sequence ID" value="NP_004562.2"/>
</dbReference>
<dbReference type="AGR" id="HGNC:9022"/>
<dbReference type="CTD" id="5316"/>
<dbReference type="DisGeNET" id="5316"/>
<dbReference type="GeneCards" id="PKNOX1"/>
<dbReference type="HGNC" id="HGNC:9022">
    <property type="gene designation" value="PKNOX1"/>
</dbReference>
<dbReference type="HPA" id="ENSG00000160199">
    <property type="expression patterns" value="Low tissue specificity"/>
</dbReference>
<dbReference type="MIM" id="602100">
    <property type="type" value="gene"/>
</dbReference>
<dbReference type="neXtProt" id="NX_P55347"/>
<dbReference type="OpenTargets" id="ENSG00000160199"/>
<dbReference type="PharmGKB" id="PA33354"/>
<dbReference type="VEuPathDB" id="HostDB:ENSG00000160199"/>
<dbReference type="eggNOG" id="KOG0773">
    <property type="taxonomic scope" value="Eukaryota"/>
</dbReference>
<dbReference type="GeneTree" id="ENSGT00940000159505"/>
<dbReference type="InParanoid" id="P55347"/>
<dbReference type="OMA" id="QHVTMPD"/>
<dbReference type="OrthoDB" id="10056939at2759"/>
<dbReference type="PAN-GO" id="P55347">
    <property type="GO annotations" value="4 GO annotations based on evolutionary models"/>
</dbReference>
<dbReference type="PhylomeDB" id="P55347"/>
<dbReference type="TreeFam" id="TF318093"/>
<dbReference type="PathwayCommons" id="P55347"/>
<dbReference type="Reactome" id="R-HSA-5617472">
    <property type="pathway name" value="Activation of anterior HOX genes in hindbrain development during early embryogenesis"/>
</dbReference>
<dbReference type="SignaLink" id="P55347"/>
<dbReference type="SIGNOR" id="P55347"/>
<dbReference type="BioGRID-ORCS" id="5316">
    <property type="hits" value="27 hits in 1186 CRISPR screens"/>
</dbReference>
<dbReference type="ChiTaRS" id="PKNOX1">
    <property type="organism name" value="human"/>
</dbReference>
<dbReference type="EvolutionaryTrace" id="P55347"/>
<dbReference type="GeneWiki" id="PKNOX1"/>
<dbReference type="GenomeRNAi" id="5316"/>
<dbReference type="Pharos" id="P55347">
    <property type="development level" value="Tbio"/>
</dbReference>
<dbReference type="PRO" id="PR:P55347"/>
<dbReference type="Proteomes" id="UP000005640">
    <property type="component" value="Chromosome 21"/>
</dbReference>
<dbReference type="RNAct" id="P55347">
    <property type="molecule type" value="protein"/>
</dbReference>
<dbReference type="Bgee" id="ENSG00000160199">
    <property type="expression patterns" value="Expressed in primordial germ cell in gonad and 198 other cell types or tissues"/>
</dbReference>
<dbReference type="ExpressionAtlas" id="P55347">
    <property type="expression patterns" value="baseline and differential"/>
</dbReference>
<dbReference type="GO" id="GO:0000785">
    <property type="term" value="C:chromatin"/>
    <property type="evidence" value="ECO:0000247"/>
    <property type="project" value="NTNU_SB"/>
</dbReference>
<dbReference type="GO" id="GO:0005737">
    <property type="term" value="C:cytoplasm"/>
    <property type="evidence" value="ECO:0007669"/>
    <property type="project" value="Ensembl"/>
</dbReference>
<dbReference type="GO" id="GO:0005634">
    <property type="term" value="C:nucleus"/>
    <property type="evidence" value="ECO:0007669"/>
    <property type="project" value="UniProtKB-SubCell"/>
</dbReference>
<dbReference type="GO" id="GO:0005667">
    <property type="term" value="C:transcription regulator complex"/>
    <property type="evidence" value="ECO:0007669"/>
    <property type="project" value="Ensembl"/>
</dbReference>
<dbReference type="GO" id="GO:0003682">
    <property type="term" value="F:chromatin binding"/>
    <property type="evidence" value="ECO:0007669"/>
    <property type="project" value="Ensembl"/>
</dbReference>
<dbReference type="GO" id="GO:0003700">
    <property type="term" value="F:DNA-binding transcription factor activity"/>
    <property type="evidence" value="ECO:0000304"/>
    <property type="project" value="ProtInc"/>
</dbReference>
<dbReference type="GO" id="GO:0000981">
    <property type="term" value="F:DNA-binding transcription factor activity, RNA polymerase II-specific"/>
    <property type="evidence" value="ECO:0000247"/>
    <property type="project" value="NTNU_SB"/>
</dbReference>
<dbReference type="GO" id="GO:0000978">
    <property type="term" value="F:RNA polymerase II cis-regulatory region sequence-specific DNA binding"/>
    <property type="evidence" value="ECO:0007669"/>
    <property type="project" value="Ensembl"/>
</dbReference>
<dbReference type="GO" id="GO:1990837">
    <property type="term" value="F:sequence-specific double-stranded DNA binding"/>
    <property type="evidence" value="ECO:0000314"/>
    <property type="project" value="ARUK-UCL"/>
</dbReference>
<dbReference type="GO" id="GO:0001525">
    <property type="term" value="P:angiogenesis"/>
    <property type="evidence" value="ECO:0000318"/>
    <property type="project" value="GO_Central"/>
</dbReference>
<dbReference type="GO" id="GO:0043010">
    <property type="term" value="P:camera-type eye development"/>
    <property type="evidence" value="ECO:0007669"/>
    <property type="project" value="Ensembl"/>
</dbReference>
<dbReference type="GO" id="GO:0030218">
    <property type="term" value="P:erythrocyte differentiation"/>
    <property type="evidence" value="ECO:0007669"/>
    <property type="project" value="Ensembl"/>
</dbReference>
<dbReference type="GO" id="GO:0045944">
    <property type="term" value="P:positive regulation of transcription by RNA polymerase II"/>
    <property type="evidence" value="ECO:0007669"/>
    <property type="project" value="Ensembl"/>
</dbReference>
<dbReference type="GO" id="GO:0030217">
    <property type="term" value="P:T cell differentiation"/>
    <property type="evidence" value="ECO:0007669"/>
    <property type="project" value="Ensembl"/>
</dbReference>
<dbReference type="GO" id="GO:0006366">
    <property type="term" value="P:transcription by RNA polymerase II"/>
    <property type="evidence" value="ECO:0000304"/>
    <property type="project" value="ProtInc"/>
</dbReference>
<dbReference type="CDD" id="cd00086">
    <property type="entry name" value="homeodomain"/>
    <property type="match status" value="1"/>
</dbReference>
<dbReference type="FunFam" id="1.10.10.60:FF:000004">
    <property type="entry name" value="Meis2 homeobox isoform 2c"/>
    <property type="match status" value="1"/>
</dbReference>
<dbReference type="Gene3D" id="1.10.10.60">
    <property type="entry name" value="Homeodomain-like"/>
    <property type="match status" value="1"/>
</dbReference>
<dbReference type="InterPro" id="IPR001356">
    <property type="entry name" value="HD"/>
</dbReference>
<dbReference type="InterPro" id="IPR009057">
    <property type="entry name" value="Homeodomain-like_sf"/>
</dbReference>
<dbReference type="InterPro" id="IPR008422">
    <property type="entry name" value="KN_HD"/>
</dbReference>
<dbReference type="InterPro" id="IPR032453">
    <property type="entry name" value="PKNOX/Meis_N"/>
</dbReference>
<dbReference type="InterPro" id="IPR050224">
    <property type="entry name" value="TALE_homeobox"/>
</dbReference>
<dbReference type="PANTHER" id="PTHR11850">
    <property type="entry name" value="HOMEOBOX PROTEIN TRANSCRIPTION FACTORS"/>
    <property type="match status" value="1"/>
</dbReference>
<dbReference type="Pfam" id="PF05920">
    <property type="entry name" value="Homeobox_KN"/>
    <property type="match status" value="1"/>
</dbReference>
<dbReference type="Pfam" id="PF16493">
    <property type="entry name" value="Meis_PKNOX_N"/>
    <property type="match status" value="1"/>
</dbReference>
<dbReference type="SMART" id="SM00389">
    <property type="entry name" value="HOX"/>
    <property type="match status" value="1"/>
</dbReference>
<dbReference type="SUPFAM" id="SSF46689">
    <property type="entry name" value="Homeodomain-like"/>
    <property type="match status" value="1"/>
</dbReference>
<dbReference type="PROSITE" id="PS50071">
    <property type="entry name" value="HOMEOBOX_2"/>
    <property type="match status" value="1"/>
</dbReference>
<gene>
    <name evidence="10 12" type="primary">PKNOX1</name>
    <name evidence="10 12" type="synonym">PREP1</name>
</gene>
<accession>P55347</accession>
<accession>O00528</accession>
<accession>Q8IWT7</accession>
<feature type="chain" id="PRO_0000049248" description="Homeobox protein PKNOX1">
    <location>
        <begin position="1"/>
        <end position="436"/>
    </location>
</feature>
<feature type="domain" description="MEIS N-terminal" evidence="2">
    <location>
        <begin position="80"/>
        <end position="163"/>
    </location>
</feature>
<feature type="DNA-binding region" description="Homeobox; TALE-type" evidence="3">
    <location>
        <begin position="259"/>
        <end position="321"/>
    </location>
</feature>
<feature type="region of interest" description="Disordered" evidence="4">
    <location>
        <begin position="1"/>
        <end position="49"/>
    </location>
</feature>
<feature type="region of interest" description="Disordered" evidence="4">
    <location>
        <begin position="401"/>
        <end position="436"/>
    </location>
</feature>
<feature type="compositionally biased region" description="Polar residues" evidence="4">
    <location>
        <begin position="1"/>
        <end position="20"/>
    </location>
</feature>
<feature type="compositionally biased region" description="Acidic residues" evidence="4">
    <location>
        <begin position="404"/>
        <end position="416"/>
    </location>
</feature>
<feature type="modified residue" description="Phosphoserine" evidence="1">
    <location>
        <position position="33"/>
    </location>
</feature>
<feature type="modified residue" description="Phosphoserine" evidence="13">
    <location>
        <position position="41"/>
    </location>
</feature>
<feature type="splice variant" id="VSP_017260" description="In isoform 2." evidence="9">
    <original>AVVTITTPVNMNVDSLQSLSSDGATLAVQQVMMAGQSEDESVDSTEEDAGALAPAHISGLVLENSDSLQ</original>
    <variation>TGGRPRPDMVDHGVGIMNKRPGSGLLAVSHRARPRMTS</variation>
    <location>
        <begin position="368"/>
        <end position="436"/>
    </location>
</feature>
<feature type="sequence variant" id="VAR_049588" description="In dbSNP:rs9976017.">
    <original>R</original>
    <variation>H</variation>
    <location>
        <position position="126"/>
    </location>
</feature>
<feature type="sequence variant" id="VAR_049589" description="In dbSNP:rs17115709.">
    <original>T</original>
    <variation>A</variation>
    <location>
        <position position="216"/>
    </location>
</feature>
<feature type="sequence variant" id="VAR_036440" description="In a colorectal cancer sample; somatic mutation; dbSNP:rs376883451." evidence="6">
    <original>V</original>
    <variation>I</variation>
    <location>
        <position position="265"/>
    </location>
</feature>
<feature type="sequence conflict" description="In Ref. 2; CAA73934." evidence="11" ref="2">
    <original>K</original>
    <variation>E</variation>
    <location>
        <position position="153"/>
    </location>
</feature>
<feature type="sequence conflict" description="In Ref. 1; AAC51243." evidence="11" ref="1">
    <original>P</original>
    <variation>A</variation>
    <location>
        <position position="347"/>
    </location>
</feature>
<feature type="sequence conflict" description="In Ref. 2; CAA73934." evidence="11" ref="2">
    <original>E</original>
    <variation>A</variation>
    <location>
        <position position="430"/>
    </location>
</feature>
<feature type="helix" evidence="14">
    <location>
        <begin position="268"/>
        <end position="280"/>
    </location>
</feature>
<feature type="turn" evidence="14">
    <location>
        <begin position="281"/>
        <end position="283"/>
    </location>
</feature>
<feature type="helix" evidence="14">
    <location>
        <begin position="289"/>
        <end position="299"/>
    </location>
</feature>
<feature type="helix" evidence="14">
    <location>
        <begin position="303"/>
        <end position="319"/>
    </location>
</feature>
<evidence type="ECO:0000250" key="1">
    <source>
        <dbReference type="UniProtKB" id="O70477"/>
    </source>
</evidence>
<evidence type="ECO:0000255" key="2"/>
<evidence type="ECO:0000255" key="3">
    <source>
        <dbReference type="PROSITE-ProRule" id="PRU00108"/>
    </source>
</evidence>
<evidence type="ECO:0000256" key="4">
    <source>
        <dbReference type="SAM" id="MobiDB-lite"/>
    </source>
</evidence>
<evidence type="ECO:0000269" key="5">
    <source>
    </source>
</evidence>
<evidence type="ECO:0000269" key="6">
    <source>
    </source>
</evidence>
<evidence type="ECO:0000269" key="7">
    <source>
    </source>
</evidence>
<evidence type="ECO:0000269" key="8">
    <source>
    </source>
</evidence>
<evidence type="ECO:0000303" key="9">
    <source>
    </source>
</evidence>
<evidence type="ECO:0000303" key="10">
    <source>
    </source>
</evidence>
<evidence type="ECO:0000305" key="11"/>
<evidence type="ECO:0000312" key="12">
    <source>
        <dbReference type="HGNC" id="HGNC:9022"/>
    </source>
</evidence>
<evidence type="ECO:0007744" key="13">
    <source>
    </source>
</evidence>
<evidence type="ECO:0007829" key="14">
    <source>
        <dbReference type="PDB" id="1X2N"/>
    </source>
</evidence>
<sequence>MMATQTLSIDSYQDGQQMQVVTELKTEQDPNCSEPDAEGVSPPPVESQTPMDVDKQAIYRHPLFPLLALLFEKCEQSTQGSEGTTSASFDVDIENFVRKQEKEGKPFFCEDPETDNLMVKAIQVLRIHLLELEKVNELCKDFCSRYIACLKTKMNSETLLSGEPGSPYSPVQSQQIQSAITGTISPQGIVVPASALQQGNVAMATVAGGTVYQPVTVVTPQGQVVTQTLSPGTIRIQNSQLQLQLNQDLSILHQDDGSSKNKRGVLPKHATNVMRSWLFQHIGHPYPTEDEKKQIAAQTNLTLLQVNNWFINARRRILQPMLDSSCSETPKTKKKTAQNRPVQRFWPDSIASGVAQPPPSELTMSEGAVVTITTPVNMNVDSLQSLSSDGATLAVQQVMMAGQSEDESVDSTEEDAGALAPAHISGLVLENSDSLQ</sequence>
<name>PKNX1_HUMAN</name>
<keyword id="KW-0002">3D-structure</keyword>
<keyword id="KW-0010">Activator</keyword>
<keyword id="KW-0025">Alternative splicing</keyword>
<keyword id="KW-0238">DNA-binding</keyword>
<keyword id="KW-0371">Homeobox</keyword>
<keyword id="KW-0539">Nucleus</keyword>
<keyword id="KW-0597">Phosphoprotein</keyword>
<keyword id="KW-1267">Proteomics identification</keyword>
<keyword id="KW-1185">Reference proteome</keyword>
<keyword id="KW-0804">Transcription</keyword>
<keyword id="KW-0805">Transcription regulation</keyword>
<organism>
    <name type="scientific">Homo sapiens</name>
    <name type="common">Human</name>
    <dbReference type="NCBI Taxonomy" id="9606"/>
    <lineage>
        <taxon>Eukaryota</taxon>
        <taxon>Metazoa</taxon>
        <taxon>Chordata</taxon>
        <taxon>Craniata</taxon>
        <taxon>Vertebrata</taxon>
        <taxon>Euteleostomi</taxon>
        <taxon>Mammalia</taxon>
        <taxon>Eutheria</taxon>
        <taxon>Euarchontoglires</taxon>
        <taxon>Primates</taxon>
        <taxon>Haplorrhini</taxon>
        <taxon>Catarrhini</taxon>
        <taxon>Hominidae</taxon>
        <taxon>Homo</taxon>
    </lineage>
</organism>
<proteinExistence type="evidence at protein level"/>